<reference key="1">
    <citation type="journal article" date="2004" name="Genome Res.">
        <title>The status, quality, and expansion of the NIH full-length cDNA project: the Mammalian Gene Collection (MGC).</title>
        <authorList>
            <consortium name="The MGC Project Team"/>
        </authorList>
    </citation>
    <scope>NUCLEOTIDE SEQUENCE [LARGE SCALE MRNA]</scope>
    <source>
        <tissue>Heart</tissue>
    </source>
</reference>
<sequence length="633" mass="69208">MSSCGACTCGAAAARLLTTSLTSAQRGISCGRIHVPVLGRLGTLDTQILRRAPLRTFSETPAYFASKDGTNKDGSGDGNKKSVTEGSSKKSGSGNSGKGGNQLRCPKCGDLCTHVETFVSSTRFVKCEKCHHFFVVLSEADSKKSIIKEPESAAEAVKLAFQQKPPPPPKKIYNYLDKYVVGQSFAKKVLSVAVYNHYKRIYNNIPANLRQQAEVEKQTSLTPRELEIRRREDEYRFTKLLQIAGISPHGNALGASMQQQGSQQMPQEKRGGEVLDSPHDDIKLEKSNILLLGPTGSGKTLLAQTLAKCLDVPFAICDCTTLTQAGYVGEDIESVIAKLLQDANYNVEKAQQGIVFLDEVDKIGSVPGIHQLRDVGGEGVQQGLLKLLEGTIVNVPEKNSRKLRGETVQVDTTNILFVASGAFNGLDRIISRRKNEKYLGFGTPSNLGKGRRAAAAADLANRSGESNTHQDIEEKDRLLRHVEARDLIEFGMIPEFVGRLPVVVPLHSLDEKTLVQILTEPRNAVIPQYQALFSMDKCELNVTEDALKAIARLALERKTGARGLRSIMEKLLLEPMFEVPNSDIVCVEVDKEVVEGKKEPGYIRAPSKESSEEDYDSGVEEDGWPRQADAANS</sequence>
<comment type="function">
    <text evidence="2">ATP-dependent chaperone that functions as an unfoldase. As part of the ClpXP protease complex, it recognizes specific protein substrates, unfolds them using energy derived from ATP hydrolysis, and then translocates them to the proteolytic subunit (CLPP) of the ClpXP complex for degradation. Thanks to its chaperone activity, it also functions in the incorporation of the pyridoxal phosphate cofactor into 5-aminolevulinate synthase, thereby activating 5-aminolevulinate (ALA) synthesis, the first step in heme biosynthesis. This chaperone is also involved in the control of mtDNA nucleoid distribution, by regulating mitochondrial transcription factor A (TFAM) activity.</text>
</comment>
<comment type="catalytic activity">
    <reaction evidence="2">
        <text>ATP + H2O = ADP + phosphate + H(+)</text>
        <dbReference type="Rhea" id="RHEA:13065"/>
        <dbReference type="ChEBI" id="CHEBI:15377"/>
        <dbReference type="ChEBI" id="CHEBI:15378"/>
        <dbReference type="ChEBI" id="CHEBI:30616"/>
        <dbReference type="ChEBI" id="CHEBI:43474"/>
        <dbReference type="ChEBI" id="CHEBI:456216"/>
        <dbReference type="EC" id="3.6.4.10"/>
    </reaction>
    <physiologicalReaction direction="left-to-right" evidence="2">
        <dbReference type="Rhea" id="RHEA:13066"/>
    </physiologicalReaction>
</comment>
<comment type="subunit">
    <text evidence="2">Homohexamer that forms a ring structure; this hexamerization requires ATP binding. Component of the ClpXP complex formed by the assembly of two CLPP heptameric rings with two CLPX hexameric rings, giving rise to a symmetrical structure with two central CLPP rings flanked by a CLPX ring at either end of the complex. Interacts with TFAM.</text>
</comment>
<comment type="subcellular location">
    <subcellularLocation>
        <location evidence="2">Mitochondrion</location>
    </subcellularLocation>
    <subcellularLocation>
        <location evidence="2">Mitochondrion matrix</location>
        <location evidence="2">Mitochondrion nucleoid</location>
    </subcellularLocation>
</comment>
<comment type="similarity">
    <text evidence="4">Belongs to the ClpX chaperone family.</text>
</comment>
<accession>Q5U2U0</accession>
<dbReference type="EC" id="3.6.4.10" evidence="2"/>
<dbReference type="EMBL" id="BC085867">
    <property type="protein sequence ID" value="AAH85867.1"/>
    <property type="molecule type" value="mRNA"/>
</dbReference>
<dbReference type="RefSeq" id="NP_001007804.1">
    <property type="nucleotide sequence ID" value="NM_001007803.2"/>
</dbReference>
<dbReference type="SMR" id="Q5U2U0"/>
<dbReference type="BioGRID" id="256711">
    <property type="interactions" value="1"/>
</dbReference>
<dbReference type="CORUM" id="Q5U2U0"/>
<dbReference type="FunCoup" id="Q5U2U0">
    <property type="interactions" value="3447"/>
</dbReference>
<dbReference type="STRING" id="10116.ENSRNOP00000050010"/>
<dbReference type="iPTMnet" id="Q5U2U0"/>
<dbReference type="PhosphoSitePlus" id="Q5U2U0"/>
<dbReference type="jPOST" id="Q5U2U0"/>
<dbReference type="PaxDb" id="10116-ENSRNOP00000050010"/>
<dbReference type="Ensembl" id="ENSRNOT00000048302.3">
    <property type="protein sequence ID" value="ENSRNOP00000050010.2"/>
    <property type="gene ID" value="ENSRNOG00000030225.5"/>
</dbReference>
<dbReference type="GeneID" id="300786"/>
<dbReference type="KEGG" id="rno:300786"/>
<dbReference type="UCSC" id="RGD:1304883">
    <property type="organism name" value="rat"/>
</dbReference>
<dbReference type="AGR" id="RGD:1304883"/>
<dbReference type="CTD" id="10845"/>
<dbReference type="RGD" id="1304883">
    <property type="gene designation" value="Clpx"/>
</dbReference>
<dbReference type="eggNOG" id="KOG0745">
    <property type="taxonomic scope" value="Eukaryota"/>
</dbReference>
<dbReference type="GeneTree" id="ENSGT00390000017625"/>
<dbReference type="HOGENOM" id="CLU_014218_0_1_1"/>
<dbReference type="InParanoid" id="Q5U2U0"/>
<dbReference type="OrthoDB" id="66065at9989"/>
<dbReference type="PhylomeDB" id="Q5U2U0"/>
<dbReference type="TreeFam" id="TF312884"/>
<dbReference type="Reactome" id="R-RNO-9837999">
    <property type="pathway name" value="Mitochondrial protein degradation"/>
</dbReference>
<dbReference type="PRO" id="PR:Q5U2U0"/>
<dbReference type="Proteomes" id="UP000002494">
    <property type="component" value="Chromosome 8"/>
</dbReference>
<dbReference type="Bgee" id="ENSRNOG00000030225">
    <property type="expression patterns" value="Expressed in liver and 20 other cell types or tissues"/>
</dbReference>
<dbReference type="GO" id="GO:0009368">
    <property type="term" value="C:endopeptidase Clp complex"/>
    <property type="evidence" value="ECO:0000250"/>
    <property type="project" value="UniProtKB"/>
</dbReference>
<dbReference type="GO" id="GO:0009841">
    <property type="term" value="C:mitochondrial endopeptidase Clp complex"/>
    <property type="evidence" value="ECO:0000266"/>
    <property type="project" value="RGD"/>
</dbReference>
<dbReference type="GO" id="GO:0005759">
    <property type="term" value="C:mitochondrial matrix"/>
    <property type="evidence" value="ECO:0000250"/>
    <property type="project" value="UniProtKB"/>
</dbReference>
<dbReference type="GO" id="GO:0042645">
    <property type="term" value="C:mitochondrial nucleoid"/>
    <property type="evidence" value="ECO:0000266"/>
    <property type="project" value="RGD"/>
</dbReference>
<dbReference type="GO" id="GO:0005739">
    <property type="term" value="C:mitochondrion"/>
    <property type="evidence" value="ECO:0000266"/>
    <property type="project" value="RGD"/>
</dbReference>
<dbReference type="GO" id="GO:0005524">
    <property type="term" value="F:ATP binding"/>
    <property type="evidence" value="ECO:0000266"/>
    <property type="project" value="RGD"/>
</dbReference>
<dbReference type="GO" id="GO:0016887">
    <property type="term" value="F:ATP hydrolysis activity"/>
    <property type="evidence" value="ECO:0000266"/>
    <property type="project" value="RGD"/>
</dbReference>
<dbReference type="GO" id="GO:0140662">
    <property type="term" value="F:ATP-dependent protein folding chaperone"/>
    <property type="evidence" value="ECO:0007669"/>
    <property type="project" value="InterPro"/>
</dbReference>
<dbReference type="GO" id="GO:0016504">
    <property type="term" value="F:peptidase activator activity"/>
    <property type="evidence" value="ECO:0000266"/>
    <property type="project" value="RGD"/>
</dbReference>
<dbReference type="GO" id="GO:0046983">
    <property type="term" value="F:protein dimerization activity"/>
    <property type="evidence" value="ECO:0007669"/>
    <property type="project" value="InterPro"/>
</dbReference>
<dbReference type="GO" id="GO:0051082">
    <property type="term" value="F:unfolded protein binding"/>
    <property type="evidence" value="ECO:0007669"/>
    <property type="project" value="InterPro"/>
</dbReference>
<dbReference type="GO" id="GO:0008270">
    <property type="term" value="F:zinc ion binding"/>
    <property type="evidence" value="ECO:0007669"/>
    <property type="project" value="InterPro"/>
</dbReference>
<dbReference type="GO" id="GO:0046034">
    <property type="term" value="P:ATP metabolic process"/>
    <property type="evidence" value="ECO:0000266"/>
    <property type="project" value="RGD"/>
</dbReference>
<dbReference type="GO" id="GO:0006508">
    <property type="term" value="P:proteolysis"/>
    <property type="evidence" value="ECO:0000266"/>
    <property type="project" value="RGD"/>
</dbReference>
<dbReference type="GO" id="GO:0051603">
    <property type="term" value="P:proteolysis involved in protein catabolic process"/>
    <property type="evidence" value="ECO:0000250"/>
    <property type="project" value="UniProtKB"/>
</dbReference>
<dbReference type="CDD" id="cd19497">
    <property type="entry name" value="RecA-like_ClpX"/>
    <property type="match status" value="1"/>
</dbReference>
<dbReference type="FunFam" id="1.10.8.60:FF:000002">
    <property type="entry name" value="ATP-dependent Clp protease ATP-binding subunit ClpX"/>
    <property type="match status" value="1"/>
</dbReference>
<dbReference type="FunFam" id="3.40.50.300:FF:000378">
    <property type="entry name" value="ATP-dependent Clp protease ATP-binding subunit clpX-like, mitochondrial"/>
    <property type="match status" value="1"/>
</dbReference>
<dbReference type="FunFam" id="3.40.50.300:FF:003247">
    <property type="entry name" value="ATP-dependent Clp protease ATP-binding subunit clpX-like, mitochondrial"/>
    <property type="match status" value="1"/>
</dbReference>
<dbReference type="Gene3D" id="1.10.8.60">
    <property type="match status" value="1"/>
</dbReference>
<dbReference type="Gene3D" id="3.40.50.300">
    <property type="entry name" value="P-loop containing nucleotide triphosphate hydrolases"/>
    <property type="match status" value="1"/>
</dbReference>
<dbReference type="InterPro" id="IPR003593">
    <property type="entry name" value="AAA+_ATPase"/>
</dbReference>
<dbReference type="InterPro" id="IPR050052">
    <property type="entry name" value="ATP-dep_Clp_protease_ClpX"/>
</dbReference>
<dbReference type="InterPro" id="IPR003959">
    <property type="entry name" value="ATPase_AAA_core"/>
</dbReference>
<dbReference type="InterPro" id="IPR019489">
    <property type="entry name" value="Clp_ATPase_C"/>
</dbReference>
<dbReference type="InterPro" id="IPR004487">
    <property type="entry name" value="Clp_protease_ATP-bd_su_ClpX"/>
</dbReference>
<dbReference type="InterPro" id="IPR027417">
    <property type="entry name" value="P-loop_NTPase"/>
</dbReference>
<dbReference type="InterPro" id="IPR010603">
    <property type="entry name" value="Znf_CppX_C4"/>
</dbReference>
<dbReference type="NCBIfam" id="TIGR00382">
    <property type="entry name" value="clpX"/>
    <property type="match status" value="1"/>
</dbReference>
<dbReference type="NCBIfam" id="NF003745">
    <property type="entry name" value="PRK05342.1"/>
    <property type="match status" value="1"/>
</dbReference>
<dbReference type="PANTHER" id="PTHR48102:SF7">
    <property type="entry name" value="ATP-DEPENDENT CLP PROTEASE ATP-BINDING SUBUNIT CLPX-LIKE, MITOCHONDRIAL"/>
    <property type="match status" value="1"/>
</dbReference>
<dbReference type="PANTHER" id="PTHR48102">
    <property type="entry name" value="ATP-DEPENDENT CLP PROTEASE ATP-BINDING SUBUNIT CLPX-LIKE, MITOCHONDRIAL-RELATED"/>
    <property type="match status" value="1"/>
</dbReference>
<dbReference type="Pfam" id="PF07724">
    <property type="entry name" value="AAA_2"/>
    <property type="match status" value="1"/>
</dbReference>
<dbReference type="Pfam" id="PF10431">
    <property type="entry name" value="ClpB_D2-small"/>
    <property type="match status" value="1"/>
</dbReference>
<dbReference type="SMART" id="SM00382">
    <property type="entry name" value="AAA"/>
    <property type="match status" value="1"/>
</dbReference>
<dbReference type="SMART" id="SM01086">
    <property type="entry name" value="ClpB_D2-small"/>
    <property type="match status" value="1"/>
</dbReference>
<dbReference type="SUPFAM" id="SSF52540">
    <property type="entry name" value="P-loop containing nucleoside triphosphate hydrolases"/>
    <property type="match status" value="1"/>
</dbReference>
<dbReference type="PROSITE" id="PS51902">
    <property type="entry name" value="CLPX_ZB"/>
    <property type="match status" value="1"/>
</dbReference>
<organism>
    <name type="scientific">Rattus norvegicus</name>
    <name type="common">Rat</name>
    <dbReference type="NCBI Taxonomy" id="10116"/>
    <lineage>
        <taxon>Eukaryota</taxon>
        <taxon>Metazoa</taxon>
        <taxon>Chordata</taxon>
        <taxon>Craniata</taxon>
        <taxon>Vertebrata</taxon>
        <taxon>Euteleostomi</taxon>
        <taxon>Mammalia</taxon>
        <taxon>Eutheria</taxon>
        <taxon>Euarchontoglires</taxon>
        <taxon>Glires</taxon>
        <taxon>Rodentia</taxon>
        <taxon>Myomorpha</taxon>
        <taxon>Muroidea</taxon>
        <taxon>Muridae</taxon>
        <taxon>Murinae</taxon>
        <taxon>Rattus</taxon>
    </lineage>
</organism>
<feature type="transit peptide" description="Mitochondrion" evidence="3">
    <location>
        <begin position="1"/>
        <end position="56"/>
    </location>
</feature>
<feature type="chain" id="PRO_0000364189" description="ATP-dependent clpX-like chaperone, mitochondrial">
    <location>
        <begin position="57"/>
        <end position="633"/>
    </location>
</feature>
<feature type="domain" description="ClpX-type ZB" evidence="4">
    <location>
        <begin position="93"/>
        <end position="146"/>
    </location>
</feature>
<feature type="region of interest" description="Disordered" evidence="5">
    <location>
        <begin position="65"/>
        <end position="101"/>
    </location>
</feature>
<feature type="region of interest" description="Disordered" evidence="5">
    <location>
        <begin position="598"/>
        <end position="633"/>
    </location>
</feature>
<feature type="compositionally biased region" description="Basic and acidic residues" evidence="5">
    <location>
        <begin position="69"/>
        <end position="83"/>
    </location>
</feature>
<feature type="compositionally biased region" description="Low complexity" evidence="5">
    <location>
        <begin position="84"/>
        <end position="93"/>
    </location>
</feature>
<feature type="compositionally biased region" description="Basic and acidic residues" evidence="5">
    <location>
        <begin position="598"/>
        <end position="610"/>
    </location>
</feature>
<feature type="compositionally biased region" description="Acidic residues" evidence="5">
    <location>
        <begin position="611"/>
        <end position="622"/>
    </location>
</feature>
<feature type="binding site" evidence="4">
    <location>
        <position position="105"/>
    </location>
    <ligand>
        <name>Zn(2+)</name>
        <dbReference type="ChEBI" id="CHEBI:29105"/>
    </ligand>
</feature>
<feature type="binding site" evidence="4">
    <location>
        <position position="108"/>
    </location>
    <ligand>
        <name>Zn(2+)</name>
        <dbReference type="ChEBI" id="CHEBI:29105"/>
    </ligand>
</feature>
<feature type="binding site" evidence="4">
    <location>
        <position position="127"/>
    </location>
    <ligand>
        <name>Zn(2+)</name>
        <dbReference type="ChEBI" id="CHEBI:29105"/>
    </ligand>
</feature>
<feature type="binding site" evidence="4">
    <location>
        <position position="130"/>
    </location>
    <ligand>
        <name>Zn(2+)</name>
        <dbReference type="ChEBI" id="CHEBI:29105"/>
    </ligand>
</feature>
<feature type="binding site" evidence="1">
    <location>
        <begin position="294"/>
        <end position="301"/>
    </location>
    <ligand>
        <name>ATP</name>
        <dbReference type="ChEBI" id="CHEBI:30616"/>
    </ligand>
</feature>
<feature type="modified residue" description="N6-acetyllysine" evidence="2">
    <location>
        <position position="437"/>
    </location>
</feature>
<feature type="modified residue" description="Phosphoserine" evidence="2">
    <location>
        <position position="617"/>
    </location>
</feature>
<proteinExistence type="evidence at transcript level"/>
<keyword id="KW-0007">Acetylation</keyword>
<keyword id="KW-0067">ATP-binding</keyword>
<keyword id="KW-0143">Chaperone</keyword>
<keyword id="KW-0378">Hydrolase</keyword>
<keyword id="KW-0479">Metal-binding</keyword>
<keyword id="KW-0496">Mitochondrion</keyword>
<keyword id="KW-1135">Mitochondrion nucleoid</keyword>
<keyword id="KW-0547">Nucleotide-binding</keyword>
<keyword id="KW-0597">Phosphoprotein</keyword>
<keyword id="KW-1185">Reference proteome</keyword>
<keyword id="KW-0809">Transit peptide</keyword>
<keyword id="KW-0862">Zinc</keyword>
<evidence type="ECO:0000250" key="1"/>
<evidence type="ECO:0000250" key="2">
    <source>
        <dbReference type="UniProtKB" id="O76031"/>
    </source>
</evidence>
<evidence type="ECO:0000255" key="3"/>
<evidence type="ECO:0000255" key="4">
    <source>
        <dbReference type="PROSITE-ProRule" id="PRU01250"/>
    </source>
</evidence>
<evidence type="ECO:0000256" key="5">
    <source>
        <dbReference type="SAM" id="MobiDB-lite"/>
    </source>
</evidence>
<evidence type="ECO:0000305" key="6"/>
<evidence type="ECO:0000312" key="7">
    <source>
        <dbReference type="RGD" id="1304883"/>
    </source>
</evidence>
<protein>
    <recommendedName>
        <fullName>ATP-dependent clpX-like chaperone, mitochondrial</fullName>
        <ecNumber evidence="2">3.6.4.10</ecNumber>
    </recommendedName>
    <alternativeName>
        <fullName evidence="6">ATP-dependent Clp protease ATP-binding subunit clpX-like, mitochondrial</fullName>
    </alternativeName>
    <alternativeName>
        <fullName evidence="7">Caseinolytic mitochondrial matrix peptidase chaperone subunit X</fullName>
    </alternativeName>
</protein>
<name>CLPX_RAT</name>
<gene>
    <name evidence="7" type="primary">Clpx</name>
</gene>